<organism>
    <name type="scientific">Magnetococcus marinus (strain ATCC BAA-1437 / JCM 17883 / MC-1)</name>
    <dbReference type="NCBI Taxonomy" id="156889"/>
    <lineage>
        <taxon>Bacteria</taxon>
        <taxon>Pseudomonadati</taxon>
        <taxon>Pseudomonadota</taxon>
        <taxon>Alphaproteobacteria</taxon>
        <taxon>Magnetococcales</taxon>
        <taxon>Magnetococcaceae</taxon>
        <taxon>Magnetococcus</taxon>
    </lineage>
</organism>
<sequence>MLKVNEYFDGAVKSIGFQSETLPATVGVMAPGAYTFGTDQKETMTVVSGALTVKLPGQDGWQRFAAAEHFEVEANQSFELKVEVATAYLCTYG</sequence>
<dbReference type="EC" id="2.4.2.1" evidence="1"/>
<dbReference type="EC" id="2.4.2.2" evidence="1"/>
<dbReference type="EMBL" id="CP000471">
    <property type="protein sequence ID" value="ABK45032.1"/>
    <property type="molecule type" value="Genomic_DNA"/>
</dbReference>
<dbReference type="RefSeq" id="WP_011714151.1">
    <property type="nucleotide sequence ID" value="NC_008576.1"/>
</dbReference>
<dbReference type="SMR" id="A0LAN9"/>
<dbReference type="STRING" id="156889.Mmc1_2532"/>
<dbReference type="KEGG" id="mgm:Mmc1_2532"/>
<dbReference type="eggNOG" id="COG3123">
    <property type="taxonomic scope" value="Bacteria"/>
</dbReference>
<dbReference type="HOGENOM" id="CLU_157874_0_0_5"/>
<dbReference type="OrthoDB" id="9793848at2"/>
<dbReference type="Proteomes" id="UP000002586">
    <property type="component" value="Chromosome"/>
</dbReference>
<dbReference type="GO" id="GO:0005829">
    <property type="term" value="C:cytosol"/>
    <property type="evidence" value="ECO:0007669"/>
    <property type="project" value="TreeGrafter"/>
</dbReference>
<dbReference type="GO" id="GO:0047975">
    <property type="term" value="F:guanosine phosphorylase activity"/>
    <property type="evidence" value="ECO:0007669"/>
    <property type="project" value="UniProtKB-EC"/>
</dbReference>
<dbReference type="GO" id="GO:0004731">
    <property type="term" value="F:purine-nucleoside phosphorylase activity"/>
    <property type="evidence" value="ECO:0007669"/>
    <property type="project" value="UniProtKB-UniRule"/>
</dbReference>
<dbReference type="GO" id="GO:0009032">
    <property type="term" value="F:thymidine phosphorylase activity"/>
    <property type="evidence" value="ECO:0007669"/>
    <property type="project" value="UniProtKB-EC"/>
</dbReference>
<dbReference type="GO" id="GO:0004850">
    <property type="term" value="F:uridine phosphorylase activity"/>
    <property type="evidence" value="ECO:0007669"/>
    <property type="project" value="UniProtKB-EC"/>
</dbReference>
<dbReference type="CDD" id="cd20296">
    <property type="entry name" value="cupin_PpnP-like"/>
    <property type="match status" value="1"/>
</dbReference>
<dbReference type="FunFam" id="2.60.120.10:FF:000016">
    <property type="entry name" value="Pyrimidine/purine nucleoside phosphorylase"/>
    <property type="match status" value="1"/>
</dbReference>
<dbReference type="Gene3D" id="2.60.120.10">
    <property type="entry name" value="Jelly Rolls"/>
    <property type="match status" value="1"/>
</dbReference>
<dbReference type="HAMAP" id="MF_01537">
    <property type="entry name" value="Nucleos_phosphorylase_PpnP"/>
    <property type="match status" value="1"/>
</dbReference>
<dbReference type="InterPro" id="IPR009664">
    <property type="entry name" value="Ppnp"/>
</dbReference>
<dbReference type="InterPro" id="IPR014710">
    <property type="entry name" value="RmlC-like_jellyroll"/>
</dbReference>
<dbReference type="InterPro" id="IPR011051">
    <property type="entry name" value="RmlC_Cupin_sf"/>
</dbReference>
<dbReference type="PANTHER" id="PTHR36540">
    <property type="entry name" value="PYRIMIDINE/PURINE NUCLEOSIDE PHOSPHORYLASE"/>
    <property type="match status" value="1"/>
</dbReference>
<dbReference type="PANTHER" id="PTHR36540:SF1">
    <property type="entry name" value="PYRIMIDINE_PURINE NUCLEOSIDE PHOSPHORYLASE"/>
    <property type="match status" value="1"/>
</dbReference>
<dbReference type="Pfam" id="PF06865">
    <property type="entry name" value="Ppnp"/>
    <property type="match status" value="1"/>
</dbReference>
<dbReference type="SUPFAM" id="SSF51182">
    <property type="entry name" value="RmlC-like cupins"/>
    <property type="match status" value="1"/>
</dbReference>
<protein>
    <recommendedName>
        <fullName evidence="1">Pyrimidine/purine nucleoside phosphorylase</fullName>
        <ecNumber evidence="1">2.4.2.1</ecNumber>
        <ecNumber evidence="1">2.4.2.2</ecNumber>
    </recommendedName>
    <alternativeName>
        <fullName evidence="1">Adenosine phosphorylase</fullName>
    </alternativeName>
    <alternativeName>
        <fullName evidence="1">Cytidine phosphorylase</fullName>
    </alternativeName>
    <alternativeName>
        <fullName evidence="1">Guanosine phosphorylase</fullName>
    </alternativeName>
    <alternativeName>
        <fullName evidence="1">Inosine phosphorylase</fullName>
    </alternativeName>
    <alternativeName>
        <fullName evidence="1">Thymidine phosphorylase</fullName>
    </alternativeName>
    <alternativeName>
        <fullName evidence="1">Uridine phosphorylase</fullName>
    </alternativeName>
    <alternativeName>
        <fullName evidence="1">Xanthosine phosphorylase</fullName>
    </alternativeName>
</protein>
<gene>
    <name evidence="1" type="primary">ppnP</name>
    <name type="ordered locus">Mmc1_2532</name>
</gene>
<keyword id="KW-0328">Glycosyltransferase</keyword>
<keyword id="KW-1185">Reference proteome</keyword>
<keyword id="KW-0808">Transferase</keyword>
<accession>A0LAN9</accession>
<comment type="function">
    <text evidence="1">Catalyzes the phosphorolysis of diverse nucleosides, yielding D-ribose 1-phosphate and the respective free bases. Can use uridine, adenosine, guanosine, cytidine, thymidine, inosine and xanthosine as substrates. Also catalyzes the reverse reactions.</text>
</comment>
<comment type="catalytic activity">
    <reaction evidence="1">
        <text>a purine D-ribonucleoside + phosphate = a purine nucleobase + alpha-D-ribose 1-phosphate</text>
        <dbReference type="Rhea" id="RHEA:19805"/>
        <dbReference type="ChEBI" id="CHEBI:26386"/>
        <dbReference type="ChEBI" id="CHEBI:43474"/>
        <dbReference type="ChEBI" id="CHEBI:57720"/>
        <dbReference type="ChEBI" id="CHEBI:142355"/>
        <dbReference type="EC" id="2.4.2.1"/>
    </reaction>
</comment>
<comment type="catalytic activity">
    <reaction evidence="1">
        <text>adenosine + phosphate = alpha-D-ribose 1-phosphate + adenine</text>
        <dbReference type="Rhea" id="RHEA:27642"/>
        <dbReference type="ChEBI" id="CHEBI:16335"/>
        <dbReference type="ChEBI" id="CHEBI:16708"/>
        <dbReference type="ChEBI" id="CHEBI:43474"/>
        <dbReference type="ChEBI" id="CHEBI:57720"/>
        <dbReference type="EC" id="2.4.2.1"/>
    </reaction>
</comment>
<comment type="catalytic activity">
    <reaction evidence="1">
        <text>cytidine + phosphate = cytosine + alpha-D-ribose 1-phosphate</text>
        <dbReference type="Rhea" id="RHEA:52540"/>
        <dbReference type="ChEBI" id="CHEBI:16040"/>
        <dbReference type="ChEBI" id="CHEBI:17562"/>
        <dbReference type="ChEBI" id="CHEBI:43474"/>
        <dbReference type="ChEBI" id="CHEBI:57720"/>
        <dbReference type="EC" id="2.4.2.2"/>
    </reaction>
</comment>
<comment type="catalytic activity">
    <reaction evidence="1">
        <text>guanosine + phosphate = alpha-D-ribose 1-phosphate + guanine</text>
        <dbReference type="Rhea" id="RHEA:13233"/>
        <dbReference type="ChEBI" id="CHEBI:16235"/>
        <dbReference type="ChEBI" id="CHEBI:16750"/>
        <dbReference type="ChEBI" id="CHEBI:43474"/>
        <dbReference type="ChEBI" id="CHEBI:57720"/>
        <dbReference type="EC" id="2.4.2.1"/>
    </reaction>
</comment>
<comment type="catalytic activity">
    <reaction evidence="1">
        <text>inosine + phosphate = alpha-D-ribose 1-phosphate + hypoxanthine</text>
        <dbReference type="Rhea" id="RHEA:27646"/>
        <dbReference type="ChEBI" id="CHEBI:17368"/>
        <dbReference type="ChEBI" id="CHEBI:17596"/>
        <dbReference type="ChEBI" id="CHEBI:43474"/>
        <dbReference type="ChEBI" id="CHEBI:57720"/>
        <dbReference type="EC" id="2.4.2.1"/>
    </reaction>
</comment>
<comment type="catalytic activity">
    <reaction evidence="1">
        <text>thymidine + phosphate = 2-deoxy-alpha-D-ribose 1-phosphate + thymine</text>
        <dbReference type="Rhea" id="RHEA:16037"/>
        <dbReference type="ChEBI" id="CHEBI:17748"/>
        <dbReference type="ChEBI" id="CHEBI:17821"/>
        <dbReference type="ChEBI" id="CHEBI:43474"/>
        <dbReference type="ChEBI" id="CHEBI:57259"/>
        <dbReference type="EC" id="2.4.2.2"/>
    </reaction>
</comment>
<comment type="catalytic activity">
    <reaction evidence="1">
        <text>uridine + phosphate = alpha-D-ribose 1-phosphate + uracil</text>
        <dbReference type="Rhea" id="RHEA:24388"/>
        <dbReference type="ChEBI" id="CHEBI:16704"/>
        <dbReference type="ChEBI" id="CHEBI:17568"/>
        <dbReference type="ChEBI" id="CHEBI:43474"/>
        <dbReference type="ChEBI" id="CHEBI:57720"/>
        <dbReference type="EC" id="2.4.2.2"/>
    </reaction>
</comment>
<comment type="catalytic activity">
    <reaction evidence="1">
        <text>xanthosine + phosphate = alpha-D-ribose 1-phosphate + xanthine</text>
        <dbReference type="Rhea" id="RHEA:27638"/>
        <dbReference type="ChEBI" id="CHEBI:17712"/>
        <dbReference type="ChEBI" id="CHEBI:18107"/>
        <dbReference type="ChEBI" id="CHEBI:43474"/>
        <dbReference type="ChEBI" id="CHEBI:57720"/>
        <dbReference type="EC" id="2.4.2.1"/>
    </reaction>
</comment>
<comment type="similarity">
    <text evidence="1">Belongs to the nucleoside phosphorylase PpnP family.</text>
</comment>
<proteinExistence type="inferred from homology"/>
<reference key="1">
    <citation type="journal article" date="2009" name="Appl. Environ. Microbiol.">
        <title>Complete genome sequence of the chemolithoautotrophic marine magnetotactic coccus strain MC-1.</title>
        <authorList>
            <person name="Schubbe S."/>
            <person name="Williams T.J."/>
            <person name="Xie G."/>
            <person name="Kiss H.E."/>
            <person name="Brettin T.S."/>
            <person name="Martinez D."/>
            <person name="Ross C.A."/>
            <person name="Schuler D."/>
            <person name="Cox B.L."/>
            <person name="Nealson K.H."/>
            <person name="Bazylinski D.A."/>
        </authorList>
    </citation>
    <scope>NUCLEOTIDE SEQUENCE [LARGE SCALE GENOMIC DNA]</scope>
    <source>
        <strain>ATCC BAA-1437 / JCM 17883 / MC-1</strain>
    </source>
</reference>
<name>PPNP_MAGMM</name>
<feature type="chain" id="PRO_0000298700" description="Pyrimidine/purine nucleoside phosphorylase">
    <location>
        <begin position="1"/>
        <end position="93"/>
    </location>
</feature>
<evidence type="ECO:0000255" key="1">
    <source>
        <dbReference type="HAMAP-Rule" id="MF_01537"/>
    </source>
</evidence>